<name>Y2333_STAAC</name>
<reference key="1">
    <citation type="journal article" date="2005" name="J. Bacteriol.">
        <title>Insights on evolution of virulence and resistance from the complete genome analysis of an early methicillin-resistant Staphylococcus aureus strain and a biofilm-producing methicillin-resistant Staphylococcus epidermidis strain.</title>
        <authorList>
            <person name="Gill S.R."/>
            <person name="Fouts D.E."/>
            <person name="Archer G.L."/>
            <person name="Mongodin E.F."/>
            <person name="DeBoy R.T."/>
            <person name="Ravel J."/>
            <person name="Paulsen I.T."/>
            <person name="Kolonay J.F."/>
            <person name="Brinkac L.M."/>
            <person name="Beanan M.J."/>
            <person name="Dodson R.J."/>
            <person name="Daugherty S.C."/>
            <person name="Madupu R."/>
            <person name="Angiuoli S.V."/>
            <person name="Durkin A.S."/>
            <person name="Haft D.H."/>
            <person name="Vamathevan J.J."/>
            <person name="Khouri H."/>
            <person name="Utterback T.R."/>
            <person name="Lee C."/>
            <person name="Dimitrov G."/>
            <person name="Jiang L."/>
            <person name="Qin H."/>
            <person name="Weidman J."/>
            <person name="Tran K."/>
            <person name="Kang K.H."/>
            <person name="Hance I.R."/>
            <person name="Nelson K.E."/>
            <person name="Fraser C.M."/>
        </authorList>
    </citation>
    <scope>NUCLEOTIDE SEQUENCE [LARGE SCALE GENOMIC DNA]</scope>
    <source>
        <strain>COL</strain>
    </source>
</reference>
<comment type="subcellular location">
    <subcellularLocation>
        <location evidence="1">Cell membrane</location>
        <topology evidence="1">Multi-pass membrane protein</topology>
    </subcellularLocation>
</comment>
<comment type="similarity">
    <text evidence="1">Belongs to the UPF0060 family.</text>
</comment>
<sequence>MLYPIFIFILAGLCEIGGGYLIWLWLREGQSSLVGLIGGAILMLYGVIATFQSFPSFGRVYAAYGGVFIIMSLIFAMVVDKQMPDKYDVIGAIICIVGVLVMLLPSRA</sequence>
<proteinExistence type="inferred from homology"/>
<gene>
    <name type="ordered locus">SACOL2333</name>
</gene>
<organism>
    <name type="scientific">Staphylococcus aureus (strain COL)</name>
    <dbReference type="NCBI Taxonomy" id="93062"/>
    <lineage>
        <taxon>Bacteria</taxon>
        <taxon>Bacillati</taxon>
        <taxon>Bacillota</taxon>
        <taxon>Bacilli</taxon>
        <taxon>Bacillales</taxon>
        <taxon>Staphylococcaceae</taxon>
        <taxon>Staphylococcus</taxon>
    </lineage>
</organism>
<dbReference type="EMBL" id="CP000046">
    <property type="protein sequence ID" value="AAW37162.1"/>
    <property type="molecule type" value="Genomic_DNA"/>
</dbReference>
<dbReference type="RefSeq" id="WP_000966695.1">
    <property type="nucleotide sequence ID" value="NZ_JBGOFO010000004.1"/>
</dbReference>
<dbReference type="SMR" id="Q5HDL7"/>
<dbReference type="KEGG" id="sac:SACOL2333"/>
<dbReference type="HOGENOM" id="CLU_117653_0_1_9"/>
<dbReference type="Proteomes" id="UP000000530">
    <property type="component" value="Chromosome"/>
</dbReference>
<dbReference type="GO" id="GO:0005886">
    <property type="term" value="C:plasma membrane"/>
    <property type="evidence" value="ECO:0007669"/>
    <property type="project" value="UniProtKB-SubCell"/>
</dbReference>
<dbReference type="HAMAP" id="MF_00010">
    <property type="entry name" value="UPF0060"/>
    <property type="match status" value="1"/>
</dbReference>
<dbReference type="InterPro" id="IPR003844">
    <property type="entry name" value="UPF0060"/>
</dbReference>
<dbReference type="NCBIfam" id="NF002586">
    <property type="entry name" value="PRK02237.1"/>
    <property type="match status" value="1"/>
</dbReference>
<dbReference type="PANTHER" id="PTHR36116">
    <property type="entry name" value="UPF0060 MEMBRANE PROTEIN YNFA"/>
    <property type="match status" value="1"/>
</dbReference>
<dbReference type="PANTHER" id="PTHR36116:SF1">
    <property type="entry name" value="UPF0060 MEMBRANE PROTEIN YNFA"/>
    <property type="match status" value="1"/>
</dbReference>
<dbReference type="Pfam" id="PF02694">
    <property type="entry name" value="UPF0060"/>
    <property type="match status" value="1"/>
</dbReference>
<dbReference type="SUPFAM" id="SSF103481">
    <property type="entry name" value="Multidrug resistance efflux transporter EmrE"/>
    <property type="match status" value="1"/>
</dbReference>
<keyword id="KW-1003">Cell membrane</keyword>
<keyword id="KW-0472">Membrane</keyword>
<keyword id="KW-0812">Transmembrane</keyword>
<keyword id="KW-1133">Transmembrane helix</keyword>
<accession>Q5HDL7</accession>
<protein>
    <recommendedName>
        <fullName evidence="1">UPF0060 membrane protein SACOL2333</fullName>
    </recommendedName>
</protein>
<evidence type="ECO:0000255" key="1">
    <source>
        <dbReference type="HAMAP-Rule" id="MF_00010"/>
    </source>
</evidence>
<feature type="chain" id="PRO_0000162346" description="UPF0060 membrane protein SACOL2333">
    <location>
        <begin position="1"/>
        <end position="108"/>
    </location>
</feature>
<feature type="transmembrane region" description="Helical" evidence="1">
    <location>
        <begin position="5"/>
        <end position="25"/>
    </location>
</feature>
<feature type="transmembrane region" description="Helical" evidence="1">
    <location>
        <begin position="31"/>
        <end position="51"/>
    </location>
</feature>
<feature type="transmembrane region" description="Helical" evidence="1">
    <location>
        <begin position="60"/>
        <end position="80"/>
    </location>
</feature>
<feature type="transmembrane region" description="Helical" evidence="1">
    <location>
        <begin position="86"/>
        <end position="106"/>
    </location>
</feature>